<comment type="function">
    <text evidence="1">Required for maturation of 30S ribosomal subunits.</text>
</comment>
<comment type="subcellular location">
    <subcellularLocation>
        <location evidence="1">Cytoplasm</location>
    </subcellularLocation>
</comment>
<comment type="similarity">
    <text evidence="1">Belongs to the RimP family.</text>
</comment>
<keyword id="KW-0963">Cytoplasm</keyword>
<keyword id="KW-0690">Ribosome biogenesis</keyword>
<feature type="chain" id="PRO_0000384757" description="Ribosome maturation factor RimP">
    <location>
        <begin position="1"/>
        <end position="154"/>
    </location>
</feature>
<evidence type="ECO:0000255" key="1">
    <source>
        <dbReference type="HAMAP-Rule" id="MF_01077"/>
    </source>
</evidence>
<accession>B5F6U0</accession>
<organism>
    <name type="scientific">Salmonella agona (strain SL483)</name>
    <dbReference type="NCBI Taxonomy" id="454166"/>
    <lineage>
        <taxon>Bacteria</taxon>
        <taxon>Pseudomonadati</taxon>
        <taxon>Pseudomonadota</taxon>
        <taxon>Gammaproteobacteria</taxon>
        <taxon>Enterobacterales</taxon>
        <taxon>Enterobacteriaceae</taxon>
        <taxon>Salmonella</taxon>
    </lineage>
</organism>
<reference key="1">
    <citation type="journal article" date="2011" name="J. Bacteriol.">
        <title>Comparative genomics of 28 Salmonella enterica isolates: evidence for CRISPR-mediated adaptive sublineage evolution.</title>
        <authorList>
            <person name="Fricke W.F."/>
            <person name="Mammel M.K."/>
            <person name="McDermott P.F."/>
            <person name="Tartera C."/>
            <person name="White D.G."/>
            <person name="Leclerc J.E."/>
            <person name="Ravel J."/>
            <person name="Cebula T.A."/>
        </authorList>
    </citation>
    <scope>NUCLEOTIDE SEQUENCE [LARGE SCALE GENOMIC DNA]</scope>
    <source>
        <strain>SL483</strain>
    </source>
</reference>
<proteinExistence type="inferred from homology"/>
<dbReference type="EMBL" id="CP001138">
    <property type="protein sequence ID" value="ACH50000.1"/>
    <property type="molecule type" value="Genomic_DNA"/>
</dbReference>
<dbReference type="SMR" id="B5F6U0"/>
<dbReference type="KEGG" id="sea:SeAg_B3477"/>
<dbReference type="HOGENOM" id="CLU_070525_1_1_6"/>
<dbReference type="Proteomes" id="UP000008819">
    <property type="component" value="Chromosome"/>
</dbReference>
<dbReference type="GO" id="GO:0005829">
    <property type="term" value="C:cytosol"/>
    <property type="evidence" value="ECO:0007669"/>
    <property type="project" value="TreeGrafter"/>
</dbReference>
<dbReference type="GO" id="GO:0000028">
    <property type="term" value="P:ribosomal small subunit assembly"/>
    <property type="evidence" value="ECO:0007669"/>
    <property type="project" value="TreeGrafter"/>
</dbReference>
<dbReference type="GO" id="GO:0006412">
    <property type="term" value="P:translation"/>
    <property type="evidence" value="ECO:0007669"/>
    <property type="project" value="TreeGrafter"/>
</dbReference>
<dbReference type="CDD" id="cd01734">
    <property type="entry name" value="YlxS_C"/>
    <property type="match status" value="1"/>
</dbReference>
<dbReference type="FunFam" id="2.30.30.180:FF:000001">
    <property type="entry name" value="Ribosome maturation factor RimP"/>
    <property type="match status" value="1"/>
</dbReference>
<dbReference type="FunFam" id="3.30.300.70:FF:000001">
    <property type="entry name" value="Ribosome maturation factor RimP"/>
    <property type="match status" value="1"/>
</dbReference>
<dbReference type="Gene3D" id="2.30.30.180">
    <property type="entry name" value="Ribosome maturation factor RimP, C-terminal domain"/>
    <property type="match status" value="1"/>
</dbReference>
<dbReference type="Gene3D" id="3.30.300.70">
    <property type="entry name" value="RimP-like superfamily, N-terminal"/>
    <property type="match status" value="1"/>
</dbReference>
<dbReference type="HAMAP" id="MF_01077">
    <property type="entry name" value="RimP"/>
    <property type="match status" value="1"/>
</dbReference>
<dbReference type="InterPro" id="IPR003728">
    <property type="entry name" value="Ribosome_maturation_RimP"/>
</dbReference>
<dbReference type="InterPro" id="IPR028998">
    <property type="entry name" value="RimP_C"/>
</dbReference>
<dbReference type="InterPro" id="IPR036847">
    <property type="entry name" value="RimP_C_sf"/>
</dbReference>
<dbReference type="InterPro" id="IPR028989">
    <property type="entry name" value="RimP_N"/>
</dbReference>
<dbReference type="InterPro" id="IPR035956">
    <property type="entry name" value="RimP_N_sf"/>
</dbReference>
<dbReference type="NCBIfam" id="NF000927">
    <property type="entry name" value="PRK00092.1-1"/>
    <property type="match status" value="1"/>
</dbReference>
<dbReference type="PANTHER" id="PTHR33867">
    <property type="entry name" value="RIBOSOME MATURATION FACTOR RIMP"/>
    <property type="match status" value="1"/>
</dbReference>
<dbReference type="PANTHER" id="PTHR33867:SF1">
    <property type="entry name" value="RIBOSOME MATURATION FACTOR RIMP"/>
    <property type="match status" value="1"/>
</dbReference>
<dbReference type="Pfam" id="PF17384">
    <property type="entry name" value="DUF150_C"/>
    <property type="match status" value="1"/>
</dbReference>
<dbReference type="Pfam" id="PF02576">
    <property type="entry name" value="RimP_N"/>
    <property type="match status" value="1"/>
</dbReference>
<dbReference type="SUPFAM" id="SSF74942">
    <property type="entry name" value="YhbC-like, C-terminal domain"/>
    <property type="match status" value="1"/>
</dbReference>
<dbReference type="SUPFAM" id="SSF75420">
    <property type="entry name" value="YhbC-like, N-terminal domain"/>
    <property type="match status" value="1"/>
</dbReference>
<protein>
    <recommendedName>
        <fullName evidence="1">Ribosome maturation factor RimP</fullName>
    </recommendedName>
</protein>
<sequence>MGVGLSTLEQKLTEMITAPVEALGYELVGIEFIRGRTSTLRIYIDSEDGINVDDCADVSHQVSAVLDVEDPISVAYNLEVSSPGLDRPMFTADHYARFQGEEVALVLRMAVQNRRKWQGIIKAVDGEMITVTVEGKDEVFALSNIQKANLVPHF</sequence>
<gene>
    <name evidence="1" type="primary">rimP</name>
    <name type="ordered locus">SeAg_B3477</name>
</gene>
<name>RIMP_SALA4</name>